<dbReference type="EC" id="2.7.1.71" evidence="1"/>
<dbReference type="EMBL" id="AE016958">
    <property type="protein sequence ID" value="AAS03409.1"/>
    <property type="molecule type" value="Genomic_DNA"/>
</dbReference>
<dbReference type="RefSeq" id="WP_003872632.1">
    <property type="nucleotide sequence ID" value="NZ_CP106873.1"/>
</dbReference>
<dbReference type="SMR" id="Q741J8"/>
<dbReference type="STRING" id="262316.MAP_1092"/>
<dbReference type="KEGG" id="mpa:MAP_1092"/>
<dbReference type="eggNOG" id="COG0703">
    <property type="taxonomic scope" value="Bacteria"/>
</dbReference>
<dbReference type="HOGENOM" id="CLU_057607_3_3_11"/>
<dbReference type="UniPathway" id="UPA00053">
    <property type="reaction ID" value="UER00088"/>
</dbReference>
<dbReference type="Proteomes" id="UP000000580">
    <property type="component" value="Chromosome"/>
</dbReference>
<dbReference type="GO" id="GO:0005829">
    <property type="term" value="C:cytosol"/>
    <property type="evidence" value="ECO:0007669"/>
    <property type="project" value="TreeGrafter"/>
</dbReference>
<dbReference type="GO" id="GO:0005524">
    <property type="term" value="F:ATP binding"/>
    <property type="evidence" value="ECO:0007669"/>
    <property type="project" value="UniProtKB-UniRule"/>
</dbReference>
<dbReference type="GO" id="GO:0000287">
    <property type="term" value="F:magnesium ion binding"/>
    <property type="evidence" value="ECO:0007669"/>
    <property type="project" value="UniProtKB-UniRule"/>
</dbReference>
<dbReference type="GO" id="GO:0004765">
    <property type="term" value="F:shikimate kinase activity"/>
    <property type="evidence" value="ECO:0007669"/>
    <property type="project" value="UniProtKB-UniRule"/>
</dbReference>
<dbReference type="GO" id="GO:0008652">
    <property type="term" value="P:amino acid biosynthetic process"/>
    <property type="evidence" value="ECO:0007669"/>
    <property type="project" value="UniProtKB-KW"/>
</dbReference>
<dbReference type="GO" id="GO:0009073">
    <property type="term" value="P:aromatic amino acid family biosynthetic process"/>
    <property type="evidence" value="ECO:0007669"/>
    <property type="project" value="UniProtKB-KW"/>
</dbReference>
<dbReference type="GO" id="GO:0009423">
    <property type="term" value="P:chorismate biosynthetic process"/>
    <property type="evidence" value="ECO:0007669"/>
    <property type="project" value="UniProtKB-UniRule"/>
</dbReference>
<dbReference type="CDD" id="cd00464">
    <property type="entry name" value="SK"/>
    <property type="match status" value="1"/>
</dbReference>
<dbReference type="Gene3D" id="3.40.50.300">
    <property type="entry name" value="P-loop containing nucleotide triphosphate hydrolases"/>
    <property type="match status" value="1"/>
</dbReference>
<dbReference type="HAMAP" id="MF_00109">
    <property type="entry name" value="Shikimate_kinase"/>
    <property type="match status" value="1"/>
</dbReference>
<dbReference type="InterPro" id="IPR027417">
    <property type="entry name" value="P-loop_NTPase"/>
</dbReference>
<dbReference type="InterPro" id="IPR031322">
    <property type="entry name" value="Shikimate/glucono_kinase"/>
</dbReference>
<dbReference type="InterPro" id="IPR000623">
    <property type="entry name" value="Shikimate_kinase/TSH1"/>
</dbReference>
<dbReference type="InterPro" id="IPR023000">
    <property type="entry name" value="Shikimate_kinase_CS"/>
</dbReference>
<dbReference type="PANTHER" id="PTHR21087">
    <property type="entry name" value="SHIKIMATE KINASE"/>
    <property type="match status" value="1"/>
</dbReference>
<dbReference type="PANTHER" id="PTHR21087:SF16">
    <property type="entry name" value="SHIKIMATE KINASE 1, CHLOROPLASTIC"/>
    <property type="match status" value="1"/>
</dbReference>
<dbReference type="Pfam" id="PF01202">
    <property type="entry name" value="SKI"/>
    <property type="match status" value="1"/>
</dbReference>
<dbReference type="PRINTS" id="PR01100">
    <property type="entry name" value="SHIKIMTKNASE"/>
</dbReference>
<dbReference type="SUPFAM" id="SSF52540">
    <property type="entry name" value="P-loop containing nucleoside triphosphate hydrolases"/>
    <property type="match status" value="1"/>
</dbReference>
<dbReference type="PROSITE" id="PS01128">
    <property type="entry name" value="SHIKIMATE_KINASE"/>
    <property type="match status" value="1"/>
</dbReference>
<protein>
    <recommendedName>
        <fullName evidence="1">Shikimate kinase</fullName>
        <shortName evidence="1">SK</shortName>
        <ecNumber evidence="1">2.7.1.71</ecNumber>
    </recommendedName>
</protein>
<comment type="function">
    <text evidence="1">Catalyzes the specific phosphorylation of the 3-hydroxyl group of shikimic acid using ATP as a cosubstrate.</text>
</comment>
<comment type="catalytic activity">
    <reaction evidence="1">
        <text>shikimate + ATP = 3-phosphoshikimate + ADP + H(+)</text>
        <dbReference type="Rhea" id="RHEA:13121"/>
        <dbReference type="ChEBI" id="CHEBI:15378"/>
        <dbReference type="ChEBI" id="CHEBI:30616"/>
        <dbReference type="ChEBI" id="CHEBI:36208"/>
        <dbReference type="ChEBI" id="CHEBI:145989"/>
        <dbReference type="ChEBI" id="CHEBI:456216"/>
        <dbReference type="EC" id="2.7.1.71"/>
    </reaction>
</comment>
<comment type="cofactor">
    <cofactor evidence="1">
        <name>Mg(2+)</name>
        <dbReference type="ChEBI" id="CHEBI:18420"/>
    </cofactor>
    <text evidence="1">Binds 1 Mg(2+) ion per subunit.</text>
</comment>
<comment type="pathway">
    <text evidence="1">Metabolic intermediate biosynthesis; chorismate biosynthesis; chorismate from D-erythrose 4-phosphate and phosphoenolpyruvate: step 5/7.</text>
</comment>
<comment type="subunit">
    <text evidence="1">Monomer.</text>
</comment>
<comment type="subcellular location">
    <subcellularLocation>
        <location evidence="1">Cytoplasm</location>
    </subcellularLocation>
</comment>
<comment type="similarity">
    <text evidence="1">Belongs to the shikimate kinase family.</text>
</comment>
<reference key="1">
    <citation type="journal article" date="2005" name="Proc. Natl. Acad. Sci. U.S.A.">
        <title>The complete genome sequence of Mycobacterium avium subspecies paratuberculosis.</title>
        <authorList>
            <person name="Li L."/>
            <person name="Bannantine J.P."/>
            <person name="Zhang Q."/>
            <person name="Amonsin A."/>
            <person name="May B.J."/>
            <person name="Alt D."/>
            <person name="Banerji N."/>
            <person name="Kanjilal S."/>
            <person name="Kapur V."/>
        </authorList>
    </citation>
    <scope>NUCLEOTIDE SEQUENCE [LARGE SCALE GENOMIC DNA]</scope>
    <source>
        <strain>ATCC BAA-968 / K-10</strain>
    </source>
</reference>
<organism>
    <name type="scientific">Mycolicibacterium paratuberculosis (strain ATCC BAA-968 / K-10)</name>
    <name type="common">Mycobacterium paratuberculosis</name>
    <dbReference type="NCBI Taxonomy" id="262316"/>
    <lineage>
        <taxon>Bacteria</taxon>
        <taxon>Bacillati</taxon>
        <taxon>Actinomycetota</taxon>
        <taxon>Actinomycetes</taxon>
        <taxon>Mycobacteriales</taxon>
        <taxon>Mycobacteriaceae</taxon>
        <taxon>Mycobacterium</taxon>
        <taxon>Mycobacterium avium complex (MAC)</taxon>
    </lineage>
</organism>
<gene>
    <name evidence="1" type="primary">aroK</name>
    <name type="ordered locus">MAP_1092</name>
</gene>
<sequence>MAPKAVLIGLPGSGKSTIGRRLAKALGVGFLDTDAAIEQRTGRPIAEIFATDGEREFRRIEEEVVRAALTEHDGVLSLGGGAVTSPGVREALAGHTVVYLEISATEGVRRTGGNTVRPLLAGPDRAEKYRALLAERSPLYRRAATIRVDTNRRNPGAVVRYIVSRLPATDACRAAT</sequence>
<evidence type="ECO:0000255" key="1">
    <source>
        <dbReference type="HAMAP-Rule" id="MF_00109"/>
    </source>
</evidence>
<feature type="chain" id="PRO_0000237896" description="Shikimate kinase">
    <location>
        <begin position="1"/>
        <end position="176"/>
    </location>
</feature>
<feature type="binding site" evidence="1">
    <location>
        <begin position="12"/>
        <end position="17"/>
    </location>
    <ligand>
        <name>ATP</name>
        <dbReference type="ChEBI" id="CHEBI:30616"/>
    </ligand>
</feature>
<feature type="binding site" evidence="1">
    <location>
        <position position="16"/>
    </location>
    <ligand>
        <name>Mg(2+)</name>
        <dbReference type="ChEBI" id="CHEBI:18420"/>
    </ligand>
</feature>
<feature type="binding site" evidence="1">
    <location>
        <position position="34"/>
    </location>
    <ligand>
        <name>substrate</name>
    </ligand>
</feature>
<feature type="binding site" evidence="1">
    <location>
        <position position="58"/>
    </location>
    <ligand>
        <name>substrate</name>
    </ligand>
</feature>
<feature type="binding site" evidence="1">
    <location>
        <position position="80"/>
    </location>
    <ligand>
        <name>substrate</name>
    </ligand>
</feature>
<feature type="binding site" evidence="1">
    <location>
        <position position="117"/>
    </location>
    <ligand>
        <name>ATP</name>
        <dbReference type="ChEBI" id="CHEBI:30616"/>
    </ligand>
</feature>
<feature type="binding site" evidence="1">
    <location>
        <position position="136"/>
    </location>
    <ligand>
        <name>substrate</name>
    </ligand>
</feature>
<feature type="binding site" evidence="1">
    <location>
        <position position="153"/>
    </location>
    <ligand>
        <name>ATP</name>
        <dbReference type="ChEBI" id="CHEBI:30616"/>
    </ligand>
</feature>
<name>AROK_MYCPA</name>
<proteinExistence type="inferred from homology"/>
<keyword id="KW-0028">Amino-acid biosynthesis</keyword>
<keyword id="KW-0057">Aromatic amino acid biosynthesis</keyword>
<keyword id="KW-0067">ATP-binding</keyword>
<keyword id="KW-0963">Cytoplasm</keyword>
<keyword id="KW-0418">Kinase</keyword>
<keyword id="KW-0460">Magnesium</keyword>
<keyword id="KW-0479">Metal-binding</keyword>
<keyword id="KW-0547">Nucleotide-binding</keyword>
<keyword id="KW-1185">Reference proteome</keyword>
<keyword id="KW-0808">Transferase</keyword>
<accession>Q741J8</accession>